<organism>
    <name type="scientific">Synechococcus sp. (strain ATCC 27144 / PCC 6301 / SAUG 1402/1)</name>
    <name type="common">Anacystis nidulans</name>
    <dbReference type="NCBI Taxonomy" id="269084"/>
    <lineage>
        <taxon>Bacteria</taxon>
        <taxon>Bacillati</taxon>
        <taxon>Cyanobacteriota</taxon>
        <taxon>Cyanophyceae</taxon>
        <taxon>Synechococcales</taxon>
        <taxon>Synechococcaceae</taxon>
        <taxon>Synechococcus</taxon>
    </lineage>
</organism>
<protein>
    <recommendedName>
        <fullName evidence="1">Large ribosomal subunit protein bL9</fullName>
    </recommendedName>
    <alternativeName>
        <fullName evidence="2">50S ribosomal protein L9</fullName>
    </alternativeName>
</protein>
<sequence length="152" mass="16679">MAKRVQVVLSQDVYKLGRDGDLVEVAPGYARNFLLPQGLAQPVTRGVLKQVEFRRAREAARLVAEKEAAVARKTALETIGRFVIKKQAGEGESIFGTVTNGDVAEAIQVATTQEVDRREITLPEIHKLGFYKVQVKLHADVTAEVEIQVAAL</sequence>
<evidence type="ECO:0000255" key="1">
    <source>
        <dbReference type="HAMAP-Rule" id="MF_00503"/>
    </source>
</evidence>
<evidence type="ECO:0000305" key="2"/>
<name>RL9_SYNP6</name>
<dbReference type="EMBL" id="AP008231">
    <property type="protein sequence ID" value="BAD79741.1"/>
    <property type="molecule type" value="Genomic_DNA"/>
</dbReference>
<dbReference type="RefSeq" id="WP_011243861.1">
    <property type="nucleotide sequence ID" value="NZ_CP085785.1"/>
</dbReference>
<dbReference type="SMR" id="Q5N1S9"/>
<dbReference type="GeneID" id="72431453"/>
<dbReference type="KEGG" id="syc:syc1551_d"/>
<dbReference type="eggNOG" id="COG0359">
    <property type="taxonomic scope" value="Bacteria"/>
</dbReference>
<dbReference type="Proteomes" id="UP000001175">
    <property type="component" value="Chromosome"/>
</dbReference>
<dbReference type="GO" id="GO:1990904">
    <property type="term" value="C:ribonucleoprotein complex"/>
    <property type="evidence" value="ECO:0007669"/>
    <property type="project" value="UniProtKB-KW"/>
</dbReference>
<dbReference type="GO" id="GO:0005840">
    <property type="term" value="C:ribosome"/>
    <property type="evidence" value="ECO:0007669"/>
    <property type="project" value="UniProtKB-KW"/>
</dbReference>
<dbReference type="GO" id="GO:0019843">
    <property type="term" value="F:rRNA binding"/>
    <property type="evidence" value="ECO:0007669"/>
    <property type="project" value="UniProtKB-UniRule"/>
</dbReference>
<dbReference type="GO" id="GO:0003735">
    <property type="term" value="F:structural constituent of ribosome"/>
    <property type="evidence" value="ECO:0007669"/>
    <property type="project" value="InterPro"/>
</dbReference>
<dbReference type="GO" id="GO:0006412">
    <property type="term" value="P:translation"/>
    <property type="evidence" value="ECO:0007669"/>
    <property type="project" value="UniProtKB-UniRule"/>
</dbReference>
<dbReference type="Gene3D" id="3.10.430.100">
    <property type="entry name" value="Ribosomal protein L9, C-terminal domain"/>
    <property type="match status" value="1"/>
</dbReference>
<dbReference type="Gene3D" id="3.40.5.10">
    <property type="entry name" value="Ribosomal protein L9, N-terminal domain"/>
    <property type="match status" value="1"/>
</dbReference>
<dbReference type="HAMAP" id="MF_00503">
    <property type="entry name" value="Ribosomal_bL9"/>
    <property type="match status" value="1"/>
</dbReference>
<dbReference type="InterPro" id="IPR000244">
    <property type="entry name" value="Ribosomal_bL9"/>
</dbReference>
<dbReference type="InterPro" id="IPR009027">
    <property type="entry name" value="Ribosomal_bL9/RNase_H1_N"/>
</dbReference>
<dbReference type="InterPro" id="IPR020594">
    <property type="entry name" value="Ribosomal_bL9_bac/chp"/>
</dbReference>
<dbReference type="InterPro" id="IPR020069">
    <property type="entry name" value="Ribosomal_bL9_C"/>
</dbReference>
<dbReference type="InterPro" id="IPR036791">
    <property type="entry name" value="Ribosomal_bL9_C_sf"/>
</dbReference>
<dbReference type="InterPro" id="IPR020070">
    <property type="entry name" value="Ribosomal_bL9_N"/>
</dbReference>
<dbReference type="InterPro" id="IPR036935">
    <property type="entry name" value="Ribosomal_bL9_N_sf"/>
</dbReference>
<dbReference type="NCBIfam" id="TIGR00158">
    <property type="entry name" value="L9"/>
    <property type="match status" value="1"/>
</dbReference>
<dbReference type="PANTHER" id="PTHR21368">
    <property type="entry name" value="50S RIBOSOMAL PROTEIN L9"/>
    <property type="match status" value="1"/>
</dbReference>
<dbReference type="Pfam" id="PF03948">
    <property type="entry name" value="Ribosomal_L9_C"/>
    <property type="match status" value="1"/>
</dbReference>
<dbReference type="Pfam" id="PF01281">
    <property type="entry name" value="Ribosomal_L9_N"/>
    <property type="match status" value="1"/>
</dbReference>
<dbReference type="SUPFAM" id="SSF55658">
    <property type="entry name" value="L9 N-domain-like"/>
    <property type="match status" value="1"/>
</dbReference>
<dbReference type="SUPFAM" id="SSF55653">
    <property type="entry name" value="Ribosomal protein L9 C-domain"/>
    <property type="match status" value="1"/>
</dbReference>
<dbReference type="PROSITE" id="PS00651">
    <property type="entry name" value="RIBOSOMAL_L9"/>
    <property type="match status" value="1"/>
</dbReference>
<keyword id="KW-0687">Ribonucleoprotein</keyword>
<keyword id="KW-0689">Ribosomal protein</keyword>
<keyword id="KW-0694">RNA-binding</keyword>
<keyword id="KW-0699">rRNA-binding</keyword>
<feature type="chain" id="PRO_0000236605" description="Large ribosomal subunit protein bL9">
    <location>
        <begin position="1"/>
        <end position="152"/>
    </location>
</feature>
<accession>Q5N1S9</accession>
<proteinExistence type="inferred from homology"/>
<gene>
    <name evidence="1" type="primary">rplI</name>
    <name evidence="1" type="synonym">rpl9</name>
    <name type="ordered locus">syc1551_d</name>
</gene>
<reference key="1">
    <citation type="journal article" date="2007" name="Photosyn. Res.">
        <title>Complete nucleotide sequence of the freshwater unicellular cyanobacterium Synechococcus elongatus PCC 6301 chromosome: gene content and organization.</title>
        <authorList>
            <person name="Sugita C."/>
            <person name="Ogata K."/>
            <person name="Shikata M."/>
            <person name="Jikuya H."/>
            <person name="Takano J."/>
            <person name="Furumichi M."/>
            <person name="Kanehisa M."/>
            <person name="Omata T."/>
            <person name="Sugiura M."/>
            <person name="Sugita M."/>
        </authorList>
    </citation>
    <scope>NUCLEOTIDE SEQUENCE [LARGE SCALE GENOMIC DNA]</scope>
    <source>
        <strain>ATCC 27144 / PCC 6301 / SAUG 1402/1</strain>
    </source>
</reference>
<comment type="function">
    <text evidence="1">Binds to the 23S rRNA.</text>
</comment>
<comment type="similarity">
    <text evidence="1">Belongs to the bacterial ribosomal protein bL9 family.</text>
</comment>